<comment type="subunit">
    <text evidence="1">Component of the DREAM complex (also named LINC complex) at least composed of E2F4, E2F5, LIN9, LIN37, LIN52, LIN54, MYBL1, MYBL2, RBL1, RBL2, RBBP4, TFDP1 and TFDP2. The complex exists in quiescent cells where it represses cell cycle-dependent genes. It dissociates in S phase when LIN9, LIN37, LIN52 and LIN54 form a subcomplex that binds to MYBL2 (By similarity).</text>
</comment>
<name>LIN37_BOVIN</name>
<organism>
    <name type="scientific">Bos taurus</name>
    <name type="common">Bovine</name>
    <dbReference type="NCBI Taxonomy" id="9913"/>
    <lineage>
        <taxon>Eukaryota</taxon>
        <taxon>Metazoa</taxon>
        <taxon>Chordata</taxon>
        <taxon>Craniata</taxon>
        <taxon>Vertebrata</taxon>
        <taxon>Euteleostomi</taxon>
        <taxon>Mammalia</taxon>
        <taxon>Eutheria</taxon>
        <taxon>Laurasiatheria</taxon>
        <taxon>Artiodactyla</taxon>
        <taxon>Ruminantia</taxon>
        <taxon>Pecora</taxon>
        <taxon>Bovidae</taxon>
        <taxon>Bovinae</taxon>
        <taxon>Bos</taxon>
    </lineage>
</organism>
<evidence type="ECO:0000250" key="1"/>
<evidence type="ECO:0000250" key="2">
    <source>
        <dbReference type="UniProtKB" id="Q96GY3"/>
    </source>
</evidence>
<evidence type="ECO:0000250" key="3">
    <source>
        <dbReference type="UniProtKB" id="Q9D8N6"/>
    </source>
</evidence>
<evidence type="ECO:0000256" key="4">
    <source>
        <dbReference type="SAM" id="MobiDB-lite"/>
    </source>
</evidence>
<keyword id="KW-0007">Acetylation</keyword>
<keyword id="KW-1017">Isopeptide bond</keyword>
<keyword id="KW-0597">Phosphoprotein</keyword>
<keyword id="KW-1185">Reference proteome</keyword>
<keyword id="KW-0832">Ubl conjugation</keyword>
<protein>
    <recommendedName>
        <fullName>Protein lin-37 homolog</fullName>
    </recommendedName>
    <alternativeName>
        <fullName>Antolefinin</fullName>
    </alternativeName>
</protein>
<sequence>MFPVKVKVEKSELEMAKARNQLDAVLQCLLEKSHMDRERLDEEPGKTSLDTHNKDCSITATGKRPSARFPHQRRKKRREMDEGLAEGGPQRSNTYVIKLFDRSVDLAQFSENTPLYPICRAWMRNSPTVRERERSPSSPLPPLPEDEEGSEVTNSKSRDVYKLPPPTAPGPPGDACRSRIPSPLQPETQGTPDDEPSEPEPSPSTLIYRNMQRWKRIRQRWKEASHRNQLRYSESMKILREMYERQ</sequence>
<reference key="1">
    <citation type="submission" date="2006-04" db="EMBL/GenBank/DDBJ databases">
        <authorList>
            <consortium name="NIH - Mammalian Gene Collection (MGC) project"/>
        </authorList>
    </citation>
    <scope>NUCLEOTIDE SEQUENCE [LARGE SCALE MRNA]</scope>
    <source>
        <strain>Crossbred X Angus</strain>
        <tissue>Liver</tissue>
    </source>
</reference>
<accession>Q1RMQ5</accession>
<gene>
    <name type="primary">LIN37</name>
</gene>
<feature type="chain" id="PRO_0000308167" description="Protein lin-37 homolog">
    <location>
        <begin position="1"/>
        <end position="246"/>
    </location>
</feature>
<feature type="region of interest" description="Disordered" evidence="4">
    <location>
        <begin position="36"/>
        <end position="90"/>
    </location>
</feature>
<feature type="region of interest" description="Disordered" evidence="4">
    <location>
        <begin position="127"/>
        <end position="209"/>
    </location>
</feature>
<feature type="compositionally biased region" description="Basic and acidic residues" evidence="4">
    <location>
        <begin position="36"/>
        <end position="55"/>
    </location>
</feature>
<feature type="compositionally biased region" description="Pro residues" evidence="4">
    <location>
        <begin position="163"/>
        <end position="172"/>
    </location>
</feature>
<feature type="modified residue" description="N-acetylmethionine" evidence="2">
    <location>
        <position position="1"/>
    </location>
</feature>
<feature type="modified residue" description="Phosphoserine" evidence="3">
    <location>
        <position position="135"/>
    </location>
</feature>
<feature type="modified residue" description="Phosphoserine" evidence="2">
    <location>
        <position position="138"/>
    </location>
</feature>
<feature type="modified residue" description="Phosphothreonine" evidence="2">
    <location>
        <position position="167"/>
    </location>
</feature>
<feature type="modified residue" description="Phosphoserine" evidence="2">
    <location>
        <position position="182"/>
    </location>
</feature>
<feature type="modified residue" description="Phosphoserine" evidence="2">
    <location>
        <position position="202"/>
    </location>
</feature>
<feature type="cross-link" description="Glycyl lysine isopeptide (Lys-Gly) (interchain with G-Cter in SUMO2)" evidence="2">
    <location>
        <position position="5"/>
    </location>
</feature>
<feature type="cross-link" description="Glycyl lysine isopeptide (Lys-Gly) (interchain with G-Cter in SUMO2)" evidence="2">
    <location>
        <position position="7"/>
    </location>
</feature>
<proteinExistence type="evidence at transcript level"/>
<dbReference type="EMBL" id="BC114775">
    <property type="protein sequence ID" value="AAI14776.1"/>
    <property type="molecule type" value="mRNA"/>
</dbReference>
<dbReference type="RefSeq" id="NP_001069494.1">
    <property type="nucleotide sequence ID" value="NM_001076026.2"/>
</dbReference>
<dbReference type="SMR" id="Q1RMQ5"/>
<dbReference type="FunCoup" id="Q1RMQ5">
    <property type="interactions" value="3370"/>
</dbReference>
<dbReference type="STRING" id="9913.ENSBTAP00000042485"/>
<dbReference type="PaxDb" id="9913-ENSBTAP00000042485"/>
<dbReference type="Ensembl" id="ENSBTAT00000045069.4">
    <property type="protein sequence ID" value="ENSBTAP00000042485.3"/>
    <property type="gene ID" value="ENSBTAG00000018594.7"/>
</dbReference>
<dbReference type="GeneID" id="534550"/>
<dbReference type="KEGG" id="bta:534550"/>
<dbReference type="CTD" id="55957"/>
<dbReference type="VEuPathDB" id="HostDB:ENSBTAG00000018594"/>
<dbReference type="VGNC" id="VGNC:30892">
    <property type="gene designation" value="LIN37"/>
</dbReference>
<dbReference type="eggNOG" id="ENOG502QV4J">
    <property type="taxonomic scope" value="Eukaryota"/>
</dbReference>
<dbReference type="GeneTree" id="ENSGT00390000002748"/>
<dbReference type="HOGENOM" id="CLU_090128_0_0_1"/>
<dbReference type="InParanoid" id="Q1RMQ5"/>
<dbReference type="OMA" id="SNVARWK"/>
<dbReference type="OrthoDB" id="6287771at2759"/>
<dbReference type="TreeFam" id="TF329230"/>
<dbReference type="Reactome" id="R-BTA-1538133">
    <property type="pathway name" value="G0 and Early G1"/>
</dbReference>
<dbReference type="Proteomes" id="UP000009136">
    <property type="component" value="Chromosome 18"/>
</dbReference>
<dbReference type="Bgee" id="ENSBTAG00000018594">
    <property type="expression patterns" value="Expressed in laryngeal cartilage and 106 other cell types or tissues"/>
</dbReference>
<dbReference type="GO" id="GO:0031523">
    <property type="term" value="C:Myb complex"/>
    <property type="evidence" value="ECO:0000318"/>
    <property type="project" value="GO_Central"/>
</dbReference>
<dbReference type="GO" id="GO:0017053">
    <property type="term" value="C:transcription repressor complex"/>
    <property type="evidence" value="ECO:0007669"/>
    <property type="project" value="InterPro"/>
</dbReference>
<dbReference type="GO" id="GO:0044877">
    <property type="term" value="F:protein-containing complex binding"/>
    <property type="evidence" value="ECO:0007669"/>
    <property type="project" value="Ensembl"/>
</dbReference>
<dbReference type="GO" id="GO:0045023">
    <property type="term" value="P:G0 to G1 transition"/>
    <property type="evidence" value="ECO:0007669"/>
    <property type="project" value="Ensembl"/>
</dbReference>
<dbReference type="GO" id="GO:0010467">
    <property type="term" value="P:gene expression"/>
    <property type="evidence" value="ECO:0007669"/>
    <property type="project" value="Ensembl"/>
</dbReference>
<dbReference type="GO" id="GO:0000122">
    <property type="term" value="P:negative regulation of transcription by RNA polymerase II"/>
    <property type="evidence" value="ECO:0000318"/>
    <property type="project" value="GO_Central"/>
</dbReference>
<dbReference type="InterPro" id="IPR028226">
    <property type="entry name" value="LIN37"/>
</dbReference>
<dbReference type="PANTHER" id="PTHR31336">
    <property type="entry name" value="LIN37 HOMOLOG"/>
    <property type="match status" value="1"/>
</dbReference>
<dbReference type="PANTHER" id="PTHR31336:SF3">
    <property type="entry name" value="PROTEIN LIN-37 HOMOLOG"/>
    <property type="match status" value="1"/>
</dbReference>
<dbReference type="Pfam" id="PF15306">
    <property type="entry name" value="LIN37"/>
    <property type="match status" value="1"/>
</dbReference>